<sequence length="109" mass="12420">MLDELRCEACSAGAIGLTSEEQQQLLSELDGWALIHRDGIAQLEKRYRFKNFKQAWAFSNQIAELAEQEFHNPAILLEWGNVTVTWWSHSIKGLHKNDFICAAKCDALT</sequence>
<proteinExistence type="inferred from homology"/>
<comment type="catalytic activity">
    <reaction>
        <text>(4aS,6R)-4a-hydroxy-L-erythro-5,6,7,8-tetrahydrobiopterin = (6R)-L-erythro-6,7-dihydrobiopterin + H2O</text>
        <dbReference type="Rhea" id="RHEA:11920"/>
        <dbReference type="ChEBI" id="CHEBI:15377"/>
        <dbReference type="ChEBI" id="CHEBI:15642"/>
        <dbReference type="ChEBI" id="CHEBI:43120"/>
        <dbReference type="EC" id="4.2.1.96"/>
    </reaction>
</comment>
<comment type="similarity">
    <text evidence="1">Belongs to the pterin-4-alpha-carbinolamine dehydratase family.</text>
</comment>
<keyword id="KW-0456">Lyase</keyword>
<keyword id="KW-1185">Reference proteome</keyword>
<name>PHS_VIBCH</name>
<protein>
    <recommendedName>
        <fullName>Putative pterin-4-alpha-carbinolamine dehydratase</fullName>
        <shortName>PHS</shortName>
        <ecNumber>4.2.1.96</ecNumber>
    </recommendedName>
    <alternativeName>
        <fullName>4-alpha-hydroxy-tetrahydropterin dehydratase</fullName>
    </alternativeName>
    <alternativeName>
        <fullName>Pterin carbinolamine dehydratase</fullName>
        <shortName>PCD</shortName>
    </alternativeName>
</protein>
<feature type="chain" id="PRO_0000063101" description="Putative pterin-4-alpha-carbinolamine dehydratase">
    <location>
        <begin position="1"/>
        <end position="109"/>
    </location>
</feature>
<evidence type="ECO:0000305" key="1"/>
<dbReference type="EC" id="4.2.1.96"/>
<dbReference type="EMBL" id="AE003853">
    <property type="protein sequence ID" value="AAF96725.1"/>
    <property type="molecule type" value="Genomic_DNA"/>
</dbReference>
<dbReference type="PIR" id="C82413">
    <property type="entry name" value="C82413"/>
</dbReference>
<dbReference type="RefSeq" id="NP_233213.1">
    <property type="nucleotide sequence ID" value="NC_002506.1"/>
</dbReference>
<dbReference type="RefSeq" id="WP_000883446.1">
    <property type="nucleotide sequence ID" value="NZ_LT906615.1"/>
</dbReference>
<dbReference type="SMR" id="Q9KLB9"/>
<dbReference type="STRING" id="243277.VC_A0827"/>
<dbReference type="DNASU" id="2612720"/>
<dbReference type="EnsemblBacteria" id="AAF96725">
    <property type="protein sequence ID" value="AAF96725"/>
    <property type="gene ID" value="VC_A0827"/>
</dbReference>
<dbReference type="KEGG" id="vch:VC_A0827"/>
<dbReference type="PATRIC" id="fig|243277.26.peg.3446"/>
<dbReference type="eggNOG" id="COG2154">
    <property type="taxonomic scope" value="Bacteria"/>
</dbReference>
<dbReference type="HOGENOM" id="CLU_081974_2_2_6"/>
<dbReference type="Proteomes" id="UP000000584">
    <property type="component" value="Chromosome 2"/>
</dbReference>
<dbReference type="GO" id="GO:0008124">
    <property type="term" value="F:4-alpha-hydroxytetrahydrobiopterin dehydratase activity"/>
    <property type="evidence" value="ECO:0007669"/>
    <property type="project" value="UniProtKB-UniRule"/>
</dbReference>
<dbReference type="GO" id="GO:0006729">
    <property type="term" value="P:tetrahydrobiopterin biosynthetic process"/>
    <property type="evidence" value="ECO:0007669"/>
    <property type="project" value="InterPro"/>
</dbReference>
<dbReference type="CDD" id="cd00913">
    <property type="entry name" value="PCD_DCoH_subfamily_a"/>
    <property type="match status" value="1"/>
</dbReference>
<dbReference type="FunFam" id="3.30.1360.20:FF:000002">
    <property type="entry name" value="Putative pterin-4-alpha-carbinolamine dehydratase"/>
    <property type="match status" value="1"/>
</dbReference>
<dbReference type="Gene3D" id="3.30.1360.20">
    <property type="entry name" value="Transcriptional coactivator/pterin dehydratase"/>
    <property type="match status" value="1"/>
</dbReference>
<dbReference type="HAMAP" id="MF_00434">
    <property type="entry name" value="Pterin_4_alpha"/>
    <property type="match status" value="1"/>
</dbReference>
<dbReference type="InterPro" id="IPR036428">
    <property type="entry name" value="PCD_sf"/>
</dbReference>
<dbReference type="InterPro" id="IPR050376">
    <property type="entry name" value="Pterin-4-alpha-carb_dehyd"/>
</dbReference>
<dbReference type="InterPro" id="IPR001533">
    <property type="entry name" value="Pterin_deHydtase"/>
</dbReference>
<dbReference type="NCBIfam" id="NF002016">
    <property type="entry name" value="PRK00823.1-1"/>
    <property type="match status" value="1"/>
</dbReference>
<dbReference type="PANTHER" id="PTHR42805">
    <property type="entry name" value="PTERIN-4-ALPHA-CARBINOLAMINE DEHYDRATASE-RELATED"/>
    <property type="match status" value="1"/>
</dbReference>
<dbReference type="PANTHER" id="PTHR42805:SF1">
    <property type="entry name" value="PTERIN-4-ALPHA-CARBINOLAMINE DEHYDRATASE-RELATED"/>
    <property type="match status" value="1"/>
</dbReference>
<dbReference type="Pfam" id="PF01329">
    <property type="entry name" value="Pterin_4a"/>
    <property type="match status" value="1"/>
</dbReference>
<dbReference type="SUPFAM" id="SSF55248">
    <property type="entry name" value="PCD-like"/>
    <property type="match status" value="1"/>
</dbReference>
<reference key="1">
    <citation type="journal article" date="2000" name="Nature">
        <title>DNA sequence of both chromosomes of the cholera pathogen Vibrio cholerae.</title>
        <authorList>
            <person name="Heidelberg J.F."/>
            <person name="Eisen J.A."/>
            <person name="Nelson W.C."/>
            <person name="Clayton R.A."/>
            <person name="Gwinn M.L."/>
            <person name="Dodson R.J."/>
            <person name="Haft D.H."/>
            <person name="Hickey E.K."/>
            <person name="Peterson J.D."/>
            <person name="Umayam L.A."/>
            <person name="Gill S.R."/>
            <person name="Nelson K.E."/>
            <person name="Read T.D."/>
            <person name="Tettelin H."/>
            <person name="Richardson D.L."/>
            <person name="Ermolaeva M.D."/>
            <person name="Vamathevan J.J."/>
            <person name="Bass S."/>
            <person name="Qin H."/>
            <person name="Dragoi I."/>
            <person name="Sellers P."/>
            <person name="McDonald L.A."/>
            <person name="Utterback T.R."/>
            <person name="Fleischmann R.D."/>
            <person name="Nierman W.C."/>
            <person name="White O."/>
            <person name="Salzberg S.L."/>
            <person name="Smith H.O."/>
            <person name="Colwell R.R."/>
            <person name="Mekalanos J.J."/>
            <person name="Venter J.C."/>
            <person name="Fraser C.M."/>
        </authorList>
    </citation>
    <scope>NUCLEOTIDE SEQUENCE [LARGE SCALE GENOMIC DNA]</scope>
    <source>
        <strain>ATCC 39315 / El Tor Inaba N16961</strain>
    </source>
</reference>
<accession>Q9KLB9</accession>
<organism>
    <name type="scientific">Vibrio cholerae serotype O1 (strain ATCC 39315 / El Tor Inaba N16961)</name>
    <dbReference type="NCBI Taxonomy" id="243277"/>
    <lineage>
        <taxon>Bacteria</taxon>
        <taxon>Pseudomonadati</taxon>
        <taxon>Pseudomonadota</taxon>
        <taxon>Gammaproteobacteria</taxon>
        <taxon>Vibrionales</taxon>
        <taxon>Vibrionaceae</taxon>
        <taxon>Vibrio</taxon>
    </lineage>
</organism>
<gene>
    <name type="ordered locus">VC_A0827</name>
</gene>